<keyword id="KW-0800">Toxin</keyword>
<name>MSD10_AMABI</name>
<organism>
    <name type="scientific">Amanita bisporigera</name>
    <name type="common">Destroying angel</name>
    <dbReference type="NCBI Taxonomy" id="87325"/>
    <lineage>
        <taxon>Eukaryota</taxon>
        <taxon>Fungi</taxon>
        <taxon>Dikarya</taxon>
        <taxon>Basidiomycota</taxon>
        <taxon>Agaricomycotina</taxon>
        <taxon>Agaricomycetes</taxon>
        <taxon>Agaricomycetidae</taxon>
        <taxon>Agaricales</taxon>
        <taxon>Pluteineae</taxon>
        <taxon>Amanitaceae</taxon>
        <taxon>Amanita</taxon>
    </lineage>
</organism>
<accession>A8W7N8</accession>
<comment type="function">
    <text evidence="4 5">Probable toxin that belongs to the MSDIN-like toxin family responsible for a large number of food poisoning cases and deaths (PubMed:18025465, PubMed:20889720).</text>
</comment>
<comment type="PTM">
    <text evidence="1 4 5">Processed by the macrocyclase-peptidase enzyme POPB to yield a toxic cyclic nonapeptide (PubMed:18025465, PubMed:20889720). POPB first removes 10 residues from the N-terminus (By similarity). Conformational trapping of the remaining peptide forces the enzyme to release this intermediate rather than proceed to macrocyclization (By similarity). The enzyme rebinds the remaining peptide in a different conformation and catalyzes macrocyclization of the N-terminal 9 residues (By similarity).</text>
</comment>
<comment type="similarity">
    <text evidence="3">Belongs to the MSDIN fungal toxin family.</text>
</comment>
<reference key="1">
    <citation type="journal article" date="2007" name="Proc. Natl. Acad. Sci. U.S.A.">
        <title>Gene family encoding the major toxins of lethal Amanita mushrooms.</title>
        <authorList>
            <person name="Hallen H.E."/>
            <person name="Luo H."/>
            <person name="Scott-Craig J.S."/>
            <person name="Walton J.D."/>
        </authorList>
    </citation>
    <scope>NUCLEOTIDE SEQUENCE [GENOMIC DNA]</scope>
    <scope>FUNCTION</scope>
</reference>
<reference key="2">
    <citation type="journal article" date="2010" name="Eukaryot. Cell">
        <title>Colocalization of amanitin and a candidate toxin-processing prolyl oligopeptidase in Amanita basidiocarps.</title>
        <authorList>
            <person name="Luo H."/>
            <person name="Hallen-Adams H.E."/>
            <person name="Scott-Craig J.S."/>
            <person name="Walton J.D."/>
        </authorList>
    </citation>
    <scope>NUCLEOTIDE SEQUENCE [GENOMIC DNA]</scope>
    <scope>FUNCTION</scope>
</reference>
<feature type="propeptide" id="PRO_0000443662" evidence="4">
    <location>
        <begin position="1"/>
        <end position="10"/>
    </location>
</feature>
<feature type="peptide" id="PRO_0000443663" description="Toxin MSD10" evidence="4">
    <location>
        <begin position="11"/>
        <end position="19"/>
    </location>
</feature>
<feature type="propeptide" id="PRO_0000443664" evidence="4">
    <location>
        <begin position="20"/>
        <end position="36"/>
    </location>
</feature>
<feature type="cross-link" description="Cyclopeptide (Gly-Pro)" evidence="4">
    <location>
        <begin position="11"/>
        <end position="19"/>
    </location>
</feature>
<sequence length="36" mass="3837">MSDINATRLPGAYPPVPMPCVGDADNFTLTRGENLC</sequence>
<proteinExistence type="inferred from homology"/>
<protein>
    <recommendedName>
        <fullName evidence="2">MSDIN-like toxin proprotein 10</fullName>
    </recommendedName>
    <component>
        <recommendedName>
            <fullName evidence="2">Toxin MSD10</fullName>
        </recommendedName>
    </component>
</protein>
<dbReference type="EMBL" id="EU196153">
    <property type="protein sequence ID" value="ABW87782.2"/>
    <property type="molecule type" value="Genomic_DNA"/>
</dbReference>
<dbReference type="GO" id="GO:0090729">
    <property type="term" value="F:toxin activity"/>
    <property type="evidence" value="ECO:0007669"/>
    <property type="project" value="UniProtKB-KW"/>
</dbReference>
<dbReference type="InterPro" id="IPR027582">
    <property type="entry name" value="Amanitin/phalloidin"/>
</dbReference>
<dbReference type="NCBIfam" id="TIGR04309">
    <property type="entry name" value="amanitin"/>
    <property type="match status" value="1"/>
</dbReference>
<gene>
    <name evidence="2" type="primary">MSD10</name>
</gene>
<evidence type="ECO:0000250" key="1">
    <source>
        <dbReference type="UniProtKB" id="A0A067SLB9"/>
    </source>
</evidence>
<evidence type="ECO:0000303" key="2">
    <source>
    </source>
</evidence>
<evidence type="ECO:0000305" key="3"/>
<evidence type="ECO:0000305" key="4">
    <source>
    </source>
</evidence>
<evidence type="ECO:0000305" key="5">
    <source>
    </source>
</evidence>